<comment type="function">
    <text evidence="1">Factor of infectivity and pathogenicity, required for optimal virus replication. Alters numerous pathways of T-lymphocyte function and down-regulates immunity surface molecules in order to evade host defense and increase viral infectivity. Alters the functionality of other immunity cells, like dendritic cells, monocytes/macrophages and NK cells.</text>
</comment>
<comment type="function">
    <text evidence="1">In infected CD4(+) T-lymphocytes, down-regulates the surface MHC-I, mature MHC-II, CD4, CD28, CCR5 and CXCR4 molecules. Mediates internalization and degradation of host CD4 through the interaction of with the cytoplasmic tail of CD4, the recruitment of AP-2 (clathrin adapter protein complex 2), internalization through clathrin coated pits, and subsequent transport to endosomes and lysosomes for degradation. Diverts host MHC-I molecules to the trans-Golgi network-associated endosomal compartments by an endocytic pathway to finally target them for degradation. MHC-I down-regulation may involve AP-1 (clathrin adapter protein complex 1) or possibly Src family kinase-ZAP70/Syk-PI3K cascade recruited by PACS2. In consequence infected cells are masked for immune recognition by cytotoxic T-lymphocytes. Decreasing the number of immune receptors also prevents reinfection by more HIV particles (superinfection). Down-regulates host SERINC3 and SERINC5 thereby excluding these proteins from the viral particles. Virion infectivity is drastically higher when SERINC3 or SERINC5 are excluded from the viral envelope, because these host antiviral proteins impair the membrane fusion event necessary for subsequent virion penetration.</text>
</comment>
<comment type="function">
    <text evidence="1">Bypasses host T-cell signaling by inducing a transcriptional program nearly identical to that of anti-CD3 cell activation. Interaction with TCR-zeta chain up-regulates the Fas ligand (FasL). Increasing surface FasL molecules and decreasing surface MHC-I molecules on infected CD4(+) cells send attacking cytotoxic CD8+ T-lymphocytes into apoptosis.</text>
</comment>
<comment type="function">
    <text evidence="1">Plays a role in optimizing the host cell environment for viral replication without causing cell death by apoptosis. Protects the infected cells from apoptosis in order to keep them alive until the next virus generation is ready to strike. Inhibits the Fas and TNFR-mediated death signals by blocking MAP3K5/ASK1. Decreases the half-life of TP53, protecting the infected cell against p53-mediated apoptosis. Inhibits the apoptotic signals regulated by the Bcl-2 family proteins through the formation of a Nef/PI3-kinase/PAK2 complex that leads to activation of PAK2 and induces phosphorylation of host BAD.</text>
</comment>
<comment type="function">
    <text evidence="1">Extracellular Nef protein targets CD4(+) T-lymphocytes for apoptosis by interacting with CXCR4 surface receptors.</text>
</comment>
<comment type="subunit">
    <text evidence="1">Monomer; cytosolic form. Homodimer; membrane bound form. Interacts with Nef associated p21-activated kinase (PAK2); this interaction activates PAK2. Associates with the Nef-MHC-I-AP1 complex; this complex is required for MHC-I internalization. Interacts (via C-terminus) with host PI3-kinase. Interacts with host PACS1; this interaction seems to be weak. Interacts with host PACS2. Interacts with host LCK and MAPK3; these interactions inhibit the kinase activity of the latter. Interacts with host ATP6V1H; this interaction may play a role in CD4 endocytosis. Associates with the CD4-Nef-AP2 complex; this complex is required for CD4 internalization. Interacts with host AP2 subunit alpha and AP2 subunit sigma2. Interacts with TCR-zeta chain; this interaction up-regulates the Fas ligand (FasL) surface expression. Interacts with host HCK, LYN, and SRC; these interactions activate the Src family kinases. Interacts with MAP3K5; this interaction inhibits the Fas and TNFR-mediated death signals. Interacts with beta-COP and PTE1. Interacts with human RACK1; this increases Nef phosphorylation by PKC. Interacts with TP53; this interaction decreases the half-life of TP53, protecting the infected cell against p53-mediated apoptosis.</text>
</comment>
<comment type="subcellular location">
    <subcellularLocation>
        <location evidence="1">Host cell membrane</location>
        <topology evidence="1">Lipid-anchor</topology>
        <orientation evidence="1">Cytoplasmic side</orientation>
    </subcellularLocation>
    <subcellularLocation>
        <location evidence="1">Virion</location>
    </subcellularLocation>
    <subcellularLocation>
        <location evidence="1">Secreted</location>
    </subcellularLocation>
    <subcellularLocation>
        <location evidence="1">Host Golgi apparatus membrane</location>
    </subcellularLocation>
    <text evidence="1">TGN localization requires PACS1. Associates with the inner plasma membrane through its N-terminal domain. Nef stimulates its own export via the release of exosomes. Incorporated in virions at a rate of about 10 molecules per virion, where it is cleaved.</text>
</comment>
<comment type="induction">
    <text evidence="1">Expressed early in the viral replication cycle.</text>
</comment>
<comment type="domain">
    <text evidence="1">The N-terminal domain is composed of the N-myristoyl glycine and of a cluster of positively charged amino acids. It is required for inner plasma membrane targeting of Nef and virion incorporation, and thereby for infectivity. This domain is also involved in binding to TP53.</text>
</comment>
<comment type="domain">
    <text evidence="1">The SH3-binding domain constituted of PxxP motifs mediates binding to several Src family proteins thereby regulating their tyrosine kinase activity. The same motifs also mediates the association with MAPK3, PI3-kinase and TCR-zeta.</text>
</comment>
<comment type="domain">
    <text evidence="1">The dileucine internalization motif and a diacidic motif seem to be required for binding to AP-2.</text>
</comment>
<comment type="domain">
    <text evidence="1">The acidic region binds to the sorting protein PACS-2, which targets Nef to the paranuclear region, enabling the PxxP motif to direct assembly of an SFK/ZAP-70/PI3K complex that accelerates endocytosis of cell-surface MHC-I.</text>
</comment>
<comment type="PTM">
    <text evidence="1">The virion-associated Nef proteins are cleaved by the viral protease to release the soluble C-terminal core protein. Nef is probably cleaved concomitantly with viral structural proteins on maturation of virus particles.</text>
</comment>
<comment type="PTM">
    <text evidence="1">Myristoylated.</text>
</comment>
<comment type="PTM">
    <text evidence="1">Phosphorylated on serine residues, probably by host PKCdelta and theta.</text>
</comment>
<comment type="miscellaneous">
    <text evidence="1">HIV-1 lineages are divided in three main groups, M (for Major), O (for Outlier), and N (for New, or Non-M, Non-O). The vast majority of strains found worldwide belong to the group M. Group O seems to be endemic to and largely confined to Cameroon and neighboring countries in West Central Africa, where these viruses represent a small minority of HIV-1 strains. The group N is represented by a limited number of isolates from Cameroonian persons. The group M is further subdivided in 9 clades or subtypes (A to D, F to H, J and K).</text>
</comment>
<comment type="similarity">
    <text evidence="1">Belongs to the lentivirus primate group Nef protein family.</text>
</comment>
<comment type="sequence caution">
    <conflict type="frameshift">
        <sequence resource="EMBL-CDS" id="AAA44858"/>
    </conflict>
</comment>
<gene>
    <name evidence="1" type="primary">nef</name>
</gene>
<keyword id="KW-0014">AIDS</keyword>
<keyword id="KW-0053">Apoptosis</keyword>
<keyword id="KW-0244">Early protein</keyword>
<keyword id="KW-1032">Host cell membrane</keyword>
<keyword id="KW-1040">Host Golgi apparatus</keyword>
<keyword id="KW-1043">Host membrane</keyword>
<keyword id="KW-0945">Host-virus interaction</keyword>
<keyword id="KW-1080">Inhibition of host adaptive immune response by virus</keyword>
<keyword id="KW-1083">Inhibition of host autophagy by virus</keyword>
<keyword id="KW-1115">Inhibition of host MHC class I molecule presentation by virus</keyword>
<keyword id="KW-1116">Inhibition of host MHC class II molecule presentation by virus</keyword>
<keyword id="KW-0449">Lipoprotein</keyword>
<keyword id="KW-0472">Membrane</keyword>
<keyword id="KW-0519">Myristate</keyword>
<keyword id="KW-0597">Phosphoprotein</keyword>
<keyword id="KW-1185">Reference proteome</keyword>
<keyword id="KW-0964">Secreted</keyword>
<keyword id="KW-0729">SH3-binding</keyword>
<keyword id="KW-0899">Viral immunoevasion</keyword>
<keyword id="KW-0946">Virion</keyword>
<keyword id="KW-0843">Virulence</keyword>
<protein>
    <recommendedName>
        <fullName evidence="1">Protein Nef</fullName>
    </recommendedName>
    <alternativeName>
        <fullName evidence="1">3'ORF</fullName>
    </alternativeName>
    <alternativeName>
        <fullName evidence="1">Negative factor</fullName>
        <shortName evidence="1">F-protein</shortName>
    </alternativeName>
    <component>
        <recommendedName>
            <fullName evidence="1">C-terminal core protein</fullName>
        </recommendedName>
    </component>
</protein>
<evidence type="ECO:0000255" key="1">
    <source>
        <dbReference type="HAMAP-Rule" id="MF_04078"/>
    </source>
</evidence>
<sequence>MGGKWSKRVTGWPTVRERMRRAEPAELAADGVGAASRDLEKHGALTSSNTAATNADCAWLEAQEEEEVGFPVKPQVPLRPMTYKAALDLSHFLKEKGGLDGLIYSQKRQDILDLWVYHTQGYFPDWQNYTPGPGIRYPLTFGWCFKLVPVEPEKIEEANKGENNCLLHPMSQHGMDDPEREVLVWKSDSHLAFQHYARELHPEYYKNC</sequence>
<organism>
    <name type="scientific">Human immunodeficiency virus type 1 group M subtype B (isolate MN)</name>
    <name type="common">HIV-1</name>
    <dbReference type="NCBI Taxonomy" id="11696"/>
    <lineage>
        <taxon>Viruses</taxon>
        <taxon>Riboviria</taxon>
        <taxon>Pararnavirae</taxon>
        <taxon>Artverviricota</taxon>
        <taxon>Revtraviricetes</taxon>
        <taxon>Ortervirales</taxon>
        <taxon>Retroviridae</taxon>
        <taxon>Orthoretrovirinae</taxon>
        <taxon>Lentivirus</taxon>
        <taxon>Human immunodeficiency virus type 1</taxon>
    </lineage>
</organism>
<proteinExistence type="inferred from homology"/>
<accession>P05856</accession>
<dbReference type="EMBL" id="M17449">
    <property type="protein sequence ID" value="AAA44858.1"/>
    <property type="status" value="ALT_FRAME"/>
    <property type="molecule type" value="Genomic_RNA"/>
</dbReference>
<dbReference type="SMR" id="P05856"/>
<dbReference type="Proteomes" id="UP000007697">
    <property type="component" value="Genome"/>
</dbReference>
<dbReference type="GO" id="GO:0005576">
    <property type="term" value="C:extracellular region"/>
    <property type="evidence" value="ECO:0007669"/>
    <property type="project" value="UniProtKB-SubCell"/>
</dbReference>
<dbReference type="GO" id="GO:0044178">
    <property type="term" value="C:host cell Golgi membrane"/>
    <property type="evidence" value="ECO:0007669"/>
    <property type="project" value="UniProtKB-SubCell"/>
</dbReference>
<dbReference type="GO" id="GO:0020002">
    <property type="term" value="C:host cell plasma membrane"/>
    <property type="evidence" value="ECO:0007669"/>
    <property type="project" value="UniProtKB-SubCell"/>
</dbReference>
<dbReference type="GO" id="GO:0016020">
    <property type="term" value="C:membrane"/>
    <property type="evidence" value="ECO:0007669"/>
    <property type="project" value="UniProtKB-UniRule"/>
</dbReference>
<dbReference type="GO" id="GO:0044423">
    <property type="term" value="C:virion component"/>
    <property type="evidence" value="ECO:0007669"/>
    <property type="project" value="UniProtKB-UniRule"/>
</dbReference>
<dbReference type="GO" id="GO:0005525">
    <property type="term" value="F:GTP binding"/>
    <property type="evidence" value="ECO:0007669"/>
    <property type="project" value="UniProtKB-UniRule"/>
</dbReference>
<dbReference type="GO" id="GO:0017124">
    <property type="term" value="F:SH3 domain binding"/>
    <property type="evidence" value="ECO:0007669"/>
    <property type="project" value="UniProtKB-UniRule"/>
</dbReference>
<dbReference type="GO" id="GO:0046776">
    <property type="term" value="P:symbiont-mediated suppression of host antigen processing and presentation of peptide antigen via MHC class I"/>
    <property type="evidence" value="ECO:0007669"/>
    <property type="project" value="UniProtKB-UniRule"/>
</dbReference>
<dbReference type="GO" id="GO:0039505">
    <property type="term" value="P:symbiont-mediated suppression of host antigen processing and presentation of peptide antigen via MHC class II"/>
    <property type="evidence" value="ECO:0007669"/>
    <property type="project" value="UniProtKB-UniRule"/>
</dbReference>
<dbReference type="GO" id="GO:0140321">
    <property type="term" value="P:symbiont-mediated suppression of host autophagy"/>
    <property type="evidence" value="ECO:0007669"/>
    <property type="project" value="UniProtKB-KW"/>
</dbReference>
<dbReference type="FunFam" id="3.30.62.10:FF:000001">
    <property type="entry name" value="Protein Nef"/>
    <property type="match status" value="1"/>
</dbReference>
<dbReference type="Gene3D" id="4.10.890.10">
    <property type="entry name" value="HIV 1 nef anchor domain"/>
    <property type="match status" value="1"/>
</dbReference>
<dbReference type="Gene3D" id="3.30.62.10">
    <property type="entry name" value="Nef Regulatory Factor"/>
    <property type="match status" value="1"/>
</dbReference>
<dbReference type="HAMAP" id="MF_04078">
    <property type="entry name" value="NEF_HIV"/>
    <property type="match status" value="1"/>
</dbReference>
<dbReference type="InterPro" id="IPR027480">
    <property type="entry name" value="HIV-1_Nef_anchor_sf"/>
</dbReference>
<dbReference type="InterPro" id="IPR027481">
    <property type="entry name" value="HIV-1_Nef_core_sf"/>
</dbReference>
<dbReference type="InterPro" id="IPR001558">
    <property type="entry name" value="HIV_Nef"/>
</dbReference>
<dbReference type="Pfam" id="PF00469">
    <property type="entry name" value="F-protein"/>
    <property type="match status" value="1"/>
</dbReference>
<dbReference type="SUPFAM" id="SSF55671">
    <property type="entry name" value="Regulatory factor Nef"/>
    <property type="match status" value="1"/>
</dbReference>
<organismHost>
    <name type="scientific">Homo sapiens</name>
    <name type="common">Human</name>
    <dbReference type="NCBI Taxonomy" id="9606"/>
</organismHost>
<reference key="1">
    <citation type="journal article" date="1988" name="Virology">
        <title>Envelope sequences of two new United States HIV-1 isolates.</title>
        <authorList>
            <person name="Gurgo C."/>
            <person name="Guo H.-G."/>
            <person name="Franchini G."/>
            <person name="Aldovini A."/>
            <person name="Collalti E."/>
            <person name="Farrell K."/>
            <person name="Wong-Staal F."/>
            <person name="Gallo R.C."/>
            <person name="Reitz M.S. Jr."/>
        </authorList>
    </citation>
    <scope>NUCLEOTIDE SEQUENCE [GENOMIC RNA]</scope>
</reference>
<name>NEF_HV1MN</name>
<feature type="initiator methionine" description="Removed; by host" evidence="1">
    <location>
        <position position="1"/>
    </location>
</feature>
<feature type="chain" id="PRO_0000038351" description="Protein Nef" evidence="1">
    <location>
        <begin position="2"/>
        <end position="208"/>
    </location>
</feature>
<feature type="chain" id="PRO_0000038352" description="C-terminal core protein" evidence="1">
    <location>
        <begin position="60"/>
        <end position="208"/>
    </location>
</feature>
<feature type="region of interest" description="Acidic; interacts with host PACS1 and PACS2; stabilizes the interaction of NEF/MHC-I with host AP1M1; necessary for MHC-I internalization" evidence="1">
    <location>
        <begin position="64"/>
        <end position="67"/>
    </location>
</feature>
<feature type="region of interest" description="SH3-binding; interaction with Src family tyrosine kinases" evidence="1">
    <location>
        <begin position="71"/>
        <end position="80"/>
    </location>
</feature>
<feature type="region of interest" description="Mediates dimerization, Nef-PTE1 interaction" evidence="1">
    <location>
        <begin position="110"/>
        <end position="126"/>
    </location>
</feature>
<feature type="region of interest" description="Binding to ATP6V1H" evidence="1">
    <location>
        <begin position="150"/>
        <end position="182"/>
    </location>
</feature>
<feature type="short sequence motif" description="PxxP; stabilizes the interaction of NEF/MHC-I with host AP1M1; necessary for MHC-I internalization" evidence="1">
    <location>
        <begin position="74"/>
        <end position="77"/>
    </location>
</feature>
<feature type="short sequence motif" description="Dileucine internalization motif; necessary for CD4 internalization" evidence="1">
    <location>
        <begin position="166"/>
        <end position="167"/>
    </location>
</feature>
<feature type="short sequence motif" description="Diacidic; necessary for CD4 internalization" evidence="1">
    <location>
        <begin position="176"/>
        <end position="177"/>
    </location>
</feature>
<feature type="site" description="Might play a role in AP-1 recruitment to the Nef-MHC-I complex" evidence="1">
    <location>
        <position position="19"/>
    </location>
</feature>
<feature type="site" description="Cleavage; by viral protease" evidence="1">
    <location>
        <begin position="59"/>
        <end position="60"/>
    </location>
</feature>
<feature type="modified residue" description="Phosphoserine; by host" evidence="1">
    <location>
        <position position="6"/>
    </location>
</feature>
<feature type="lipid moiety-binding region" description="N-myristoyl glycine; by host" evidence="1">
    <location>
        <position position="2"/>
    </location>
</feature>